<protein>
    <recommendedName>
        <fullName evidence="1">UPF0301 protein Rsph17029_2659</fullName>
    </recommendedName>
</protein>
<organism>
    <name type="scientific">Cereibacter sphaeroides (strain ATCC 17029 / ATH 2.4.9)</name>
    <name type="common">Rhodobacter sphaeroides</name>
    <dbReference type="NCBI Taxonomy" id="349101"/>
    <lineage>
        <taxon>Bacteria</taxon>
        <taxon>Pseudomonadati</taxon>
        <taxon>Pseudomonadota</taxon>
        <taxon>Alphaproteobacteria</taxon>
        <taxon>Rhodobacterales</taxon>
        <taxon>Paracoccaceae</taxon>
        <taxon>Cereibacter</taxon>
    </lineage>
</organism>
<evidence type="ECO:0000255" key="1">
    <source>
        <dbReference type="HAMAP-Rule" id="MF_00758"/>
    </source>
</evidence>
<sequence>MDLSGSLLIAMPSMADPRFERSLVLICAHSPDGAMGLVINKPVEDLSFAGMLEQLNIPRAPNGRDIRVHLGGPMERGRGFVLHSPDYMSVGATMLVSGKFGMTATVDILEALARGQGPSSALMALGYSGWGPGQLEAEVQRNDWLTAEAPSELVFSDDDPGKWTGMLRHMGIDPLTLSSTAGHA</sequence>
<dbReference type="EMBL" id="CP000577">
    <property type="protein sequence ID" value="ABN77761.1"/>
    <property type="molecule type" value="Genomic_DNA"/>
</dbReference>
<dbReference type="RefSeq" id="WP_002721317.1">
    <property type="nucleotide sequence ID" value="NC_009049.1"/>
</dbReference>
<dbReference type="SMR" id="A3PN45"/>
<dbReference type="KEGG" id="rsh:Rsph17029_2659"/>
<dbReference type="HOGENOM" id="CLU_057596_1_0_5"/>
<dbReference type="GO" id="GO:0005829">
    <property type="term" value="C:cytosol"/>
    <property type="evidence" value="ECO:0007669"/>
    <property type="project" value="TreeGrafter"/>
</dbReference>
<dbReference type="Gene3D" id="3.40.1740.10">
    <property type="entry name" value="VC0467-like"/>
    <property type="match status" value="1"/>
</dbReference>
<dbReference type="HAMAP" id="MF_00758">
    <property type="entry name" value="UPF0301"/>
    <property type="match status" value="1"/>
</dbReference>
<dbReference type="InterPro" id="IPR003774">
    <property type="entry name" value="AlgH-like"/>
</dbReference>
<dbReference type="NCBIfam" id="NF001268">
    <property type="entry name" value="PRK00228.1-4"/>
    <property type="match status" value="1"/>
</dbReference>
<dbReference type="PANTHER" id="PTHR30327">
    <property type="entry name" value="UNCHARACTERIZED PROTEIN YQGE"/>
    <property type="match status" value="1"/>
</dbReference>
<dbReference type="PANTHER" id="PTHR30327:SF1">
    <property type="entry name" value="UPF0301 PROTEIN YQGE"/>
    <property type="match status" value="1"/>
</dbReference>
<dbReference type="Pfam" id="PF02622">
    <property type="entry name" value="DUF179"/>
    <property type="match status" value="1"/>
</dbReference>
<dbReference type="SUPFAM" id="SSF143456">
    <property type="entry name" value="VC0467-like"/>
    <property type="match status" value="1"/>
</dbReference>
<comment type="similarity">
    <text evidence="1">Belongs to the UPF0301 (AlgH) family.</text>
</comment>
<name>Y2659_CERS1</name>
<feature type="chain" id="PRO_1000046674" description="UPF0301 protein Rsph17029_2659">
    <location>
        <begin position="1"/>
        <end position="184"/>
    </location>
</feature>
<accession>A3PN45</accession>
<reference key="1">
    <citation type="submission" date="2007-02" db="EMBL/GenBank/DDBJ databases">
        <title>Complete sequence of chromosome 1 of Rhodobacter sphaeroides ATCC 17029.</title>
        <authorList>
            <person name="Copeland A."/>
            <person name="Lucas S."/>
            <person name="Lapidus A."/>
            <person name="Barry K."/>
            <person name="Detter J.C."/>
            <person name="Glavina del Rio T."/>
            <person name="Hammon N."/>
            <person name="Israni S."/>
            <person name="Dalin E."/>
            <person name="Tice H."/>
            <person name="Pitluck S."/>
            <person name="Kiss H."/>
            <person name="Brettin T."/>
            <person name="Bruce D."/>
            <person name="Han C."/>
            <person name="Tapia R."/>
            <person name="Gilna P."/>
            <person name="Schmutz J."/>
            <person name="Larimer F."/>
            <person name="Land M."/>
            <person name="Hauser L."/>
            <person name="Kyrpides N."/>
            <person name="Mikhailova N."/>
            <person name="Richardson P."/>
            <person name="Mackenzie C."/>
            <person name="Choudhary M."/>
            <person name="Donohue T.J."/>
            <person name="Kaplan S."/>
        </authorList>
    </citation>
    <scope>NUCLEOTIDE SEQUENCE [LARGE SCALE GENOMIC DNA]</scope>
    <source>
        <strain>ATCC 17029 / ATH 2.4.9</strain>
    </source>
</reference>
<gene>
    <name type="ordered locus">Rsph17029_2659</name>
</gene>
<proteinExistence type="inferred from homology"/>